<feature type="chain" id="PRO_0000205346" description="Uncharacterized protein SCO3922">
    <location>
        <begin position="1"/>
        <end position="125"/>
    </location>
</feature>
<feature type="transmembrane region" description="Helical" evidence="1">
    <location>
        <begin position="9"/>
        <end position="29"/>
    </location>
</feature>
<feature type="transmembrane region" description="Helical" evidence="1">
    <location>
        <begin position="33"/>
        <end position="53"/>
    </location>
</feature>
<feature type="transmembrane region" description="Helical" evidence="1">
    <location>
        <begin position="56"/>
        <end position="76"/>
    </location>
</feature>
<feature type="transmembrane region" description="Helical" evidence="1">
    <location>
        <begin position="100"/>
        <end position="120"/>
    </location>
</feature>
<proteinExistence type="predicted"/>
<evidence type="ECO:0000255" key="1"/>
<evidence type="ECO:0000305" key="2"/>
<gene>
    <name type="ordered locus">SCO3922</name>
    <name type="ORF">SCQ11.05c</name>
</gene>
<name>Y3922_STRCO</name>
<reference key="1">
    <citation type="journal article" date="1996" name="J. Bacteriol.">
        <title>Cloning, purification, and properties of a phosphotyrosine protein phosphatase from Streptomyces coelicolor A3(2).</title>
        <authorList>
            <person name="Li Y."/>
            <person name="Strohl W.R."/>
        </authorList>
    </citation>
    <scope>NUCLEOTIDE SEQUENCE [GENOMIC DNA]</scope>
    <source>
        <strain>A3(2) / 1147</strain>
    </source>
</reference>
<reference key="2">
    <citation type="journal article" date="2002" name="Nature">
        <title>Complete genome sequence of the model actinomycete Streptomyces coelicolor A3(2).</title>
        <authorList>
            <person name="Bentley S.D."/>
            <person name="Chater K.F."/>
            <person name="Cerdeno-Tarraga A.-M."/>
            <person name="Challis G.L."/>
            <person name="Thomson N.R."/>
            <person name="James K.D."/>
            <person name="Harris D.E."/>
            <person name="Quail M.A."/>
            <person name="Kieser H."/>
            <person name="Harper D."/>
            <person name="Bateman A."/>
            <person name="Brown S."/>
            <person name="Chandra G."/>
            <person name="Chen C.W."/>
            <person name="Collins M."/>
            <person name="Cronin A."/>
            <person name="Fraser A."/>
            <person name="Goble A."/>
            <person name="Hidalgo J."/>
            <person name="Hornsby T."/>
            <person name="Howarth S."/>
            <person name="Huang C.-H."/>
            <person name="Kieser T."/>
            <person name="Larke L."/>
            <person name="Murphy L.D."/>
            <person name="Oliver K."/>
            <person name="O'Neil S."/>
            <person name="Rabbinowitsch E."/>
            <person name="Rajandream M.A."/>
            <person name="Rutherford K.M."/>
            <person name="Rutter S."/>
            <person name="Seeger K."/>
            <person name="Saunders D."/>
            <person name="Sharp S."/>
            <person name="Squares R."/>
            <person name="Squares S."/>
            <person name="Taylor K."/>
            <person name="Warren T."/>
            <person name="Wietzorrek A."/>
            <person name="Woodward J.R."/>
            <person name="Barrell B.G."/>
            <person name="Parkhill J."/>
            <person name="Hopwood D.A."/>
        </authorList>
    </citation>
    <scope>NUCLEOTIDE SEQUENCE [LARGE SCALE GENOMIC DNA]</scope>
    <source>
        <strain>ATCC BAA-471 / A3(2) / M145</strain>
    </source>
</reference>
<comment type="subcellular location">
    <subcellularLocation>
        <location evidence="2">Cell membrane</location>
        <topology evidence="2">Multi-pass membrane protein</topology>
    </subcellularLocation>
</comment>
<comment type="sequence caution" evidence="2">
    <conflict type="erroneous initiation">
        <sequence resource="EMBL-CDS" id="AAC43613"/>
    </conflict>
</comment>
<organism>
    <name type="scientific">Streptomyces coelicolor (strain ATCC BAA-471 / A3(2) / M145)</name>
    <dbReference type="NCBI Taxonomy" id="100226"/>
    <lineage>
        <taxon>Bacteria</taxon>
        <taxon>Bacillati</taxon>
        <taxon>Actinomycetota</taxon>
        <taxon>Actinomycetes</taxon>
        <taxon>Kitasatosporales</taxon>
        <taxon>Streptomycetaceae</taxon>
        <taxon>Streptomyces</taxon>
        <taxon>Streptomyces albidoflavus group</taxon>
    </lineage>
</organism>
<dbReference type="EMBL" id="U37580">
    <property type="protein sequence ID" value="AAC43613.1"/>
    <property type="status" value="ALT_INIT"/>
    <property type="molecule type" value="Genomic_DNA"/>
</dbReference>
<dbReference type="EMBL" id="AL939118">
    <property type="protein sequence ID" value="CAB46960.1"/>
    <property type="molecule type" value="Genomic_DNA"/>
</dbReference>
<dbReference type="PIR" id="T37175">
    <property type="entry name" value="T37175"/>
</dbReference>
<dbReference type="RefSeq" id="NP_628107.1">
    <property type="nucleotide sequence ID" value="NC_003888.3"/>
</dbReference>
<dbReference type="RefSeq" id="WP_003975010.1">
    <property type="nucleotide sequence ID" value="NZ_VNID01000003.1"/>
</dbReference>
<dbReference type="SMR" id="Q53868"/>
<dbReference type="FunCoup" id="Q53868">
    <property type="interactions" value="2"/>
</dbReference>
<dbReference type="STRING" id="100226.gene:17761549"/>
<dbReference type="PaxDb" id="100226-SCO3922"/>
<dbReference type="KEGG" id="sco:SCO3922"/>
<dbReference type="PATRIC" id="fig|100226.15.peg.3996"/>
<dbReference type="eggNOG" id="COG1950">
    <property type="taxonomic scope" value="Bacteria"/>
</dbReference>
<dbReference type="HOGENOM" id="CLU_120441_0_0_11"/>
<dbReference type="InParanoid" id="Q53868"/>
<dbReference type="OrthoDB" id="9810847at2"/>
<dbReference type="PhylomeDB" id="Q53868"/>
<dbReference type="Proteomes" id="UP000001973">
    <property type="component" value="Chromosome"/>
</dbReference>
<dbReference type="GO" id="GO:0005886">
    <property type="term" value="C:plasma membrane"/>
    <property type="evidence" value="ECO:0007669"/>
    <property type="project" value="UniProtKB-SubCell"/>
</dbReference>
<dbReference type="InterPro" id="IPR007165">
    <property type="entry name" value="Phage_holin_4_2"/>
</dbReference>
<dbReference type="PANTHER" id="PTHR37309">
    <property type="entry name" value="SLR0284 PROTEIN"/>
    <property type="match status" value="1"/>
</dbReference>
<dbReference type="PANTHER" id="PTHR37309:SF1">
    <property type="entry name" value="SLR0284 PROTEIN"/>
    <property type="match status" value="1"/>
</dbReference>
<dbReference type="Pfam" id="PF04020">
    <property type="entry name" value="Phage_holin_4_2"/>
    <property type="match status" value="1"/>
</dbReference>
<accession>Q53868</accession>
<accession>Q9S1M9</accession>
<protein>
    <recommendedName>
        <fullName>Uncharacterized protein SCO3922</fullName>
    </recommendedName>
</protein>
<sequence length="125" mass="13355">MKNFLVKTIANAGALAVAVWLLDKITLTGGSTGEKTLTLIVVALVFGLVNMVVKPIVQVLTFPLFILTLGLFTLVVNALMLLLTSWVADKLDLSFHVDGFWTAVLGGLIVSIVSWALNAFLPDGD</sequence>
<keyword id="KW-1003">Cell membrane</keyword>
<keyword id="KW-0472">Membrane</keyword>
<keyword id="KW-1185">Reference proteome</keyword>
<keyword id="KW-0812">Transmembrane</keyword>
<keyword id="KW-1133">Transmembrane helix</keyword>